<accession>Q66EG4</accession>
<organism>
    <name type="scientific">Yersinia pseudotuberculosis serotype I (strain IP32953)</name>
    <dbReference type="NCBI Taxonomy" id="273123"/>
    <lineage>
        <taxon>Bacteria</taxon>
        <taxon>Pseudomonadati</taxon>
        <taxon>Pseudomonadota</taxon>
        <taxon>Gammaproteobacteria</taxon>
        <taxon>Enterobacterales</taxon>
        <taxon>Yersiniaceae</taxon>
        <taxon>Yersinia</taxon>
    </lineage>
</organism>
<sequence>MLIIETLPLLRQQIRRWRQEGKRIALVPTMGNLHEGHMTLVDEAKTRADVVVVTIFVNPLQFERPDDLAHYPRTLQEDCEKLTRHGADLVFAPAAADIYPAGLEKQTYVDVPALSTILEGASRPGHFRGVSTIVSKLFNLIQPDVACFGEKDYQQLALIRKMVADMGYDINIVGVPTVRAKDGLALSSRNGYLTEEERQIAPQLSKIMWALAEKMALGERQIDALLEDAAAQLLRAGFTPDELFIRDAETLQPLTVDSQQAVILMAAWLGKARLIDNQLVDLRH</sequence>
<feature type="chain" id="PRO_0000128296" description="Pantothenate synthetase">
    <location>
        <begin position="1"/>
        <end position="284"/>
    </location>
</feature>
<feature type="active site" description="Proton donor" evidence="1">
    <location>
        <position position="37"/>
    </location>
</feature>
<feature type="binding site" evidence="1">
    <location>
        <begin position="30"/>
        <end position="37"/>
    </location>
    <ligand>
        <name>ATP</name>
        <dbReference type="ChEBI" id="CHEBI:30616"/>
    </ligand>
</feature>
<feature type="binding site" evidence="1">
    <location>
        <position position="61"/>
    </location>
    <ligand>
        <name>(R)-pantoate</name>
        <dbReference type="ChEBI" id="CHEBI:15980"/>
    </ligand>
</feature>
<feature type="binding site" evidence="1">
    <location>
        <position position="61"/>
    </location>
    <ligand>
        <name>beta-alanine</name>
        <dbReference type="ChEBI" id="CHEBI:57966"/>
    </ligand>
</feature>
<feature type="binding site" evidence="1">
    <location>
        <begin position="149"/>
        <end position="152"/>
    </location>
    <ligand>
        <name>ATP</name>
        <dbReference type="ChEBI" id="CHEBI:30616"/>
    </ligand>
</feature>
<feature type="binding site" evidence="1">
    <location>
        <position position="155"/>
    </location>
    <ligand>
        <name>(R)-pantoate</name>
        <dbReference type="ChEBI" id="CHEBI:15980"/>
    </ligand>
</feature>
<feature type="binding site" evidence="1">
    <location>
        <position position="178"/>
    </location>
    <ligand>
        <name>ATP</name>
        <dbReference type="ChEBI" id="CHEBI:30616"/>
    </ligand>
</feature>
<feature type="binding site" evidence="1">
    <location>
        <begin position="186"/>
        <end position="189"/>
    </location>
    <ligand>
        <name>ATP</name>
        <dbReference type="ChEBI" id="CHEBI:30616"/>
    </ligand>
</feature>
<reference key="1">
    <citation type="journal article" date="2004" name="Proc. Natl. Acad. Sci. U.S.A.">
        <title>Insights into the evolution of Yersinia pestis through whole-genome comparison with Yersinia pseudotuberculosis.</title>
        <authorList>
            <person name="Chain P.S.G."/>
            <person name="Carniel E."/>
            <person name="Larimer F.W."/>
            <person name="Lamerdin J."/>
            <person name="Stoutland P.O."/>
            <person name="Regala W.M."/>
            <person name="Georgescu A.M."/>
            <person name="Vergez L.M."/>
            <person name="Land M.L."/>
            <person name="Motin V.L."/>
            <person name="Brubaker R.R."/>
            <person name="Fowler J."/>
            <person name="Hinnebusch J."/>
            <person name="Marceau M."/>
            <person name="Medigue C."/>
            <person name="Simonet M."/>
            <person name="Chenal-Francisque V."/>
            <person name="Souza B."/>
            <person name="Dacheux D."/>
            <person name="Elliott J.M."/>
            <person name="Derbise A."/>
            <person name="Hauser L.J."/>
            <person name="Garcia E."/>
        </authorList>
    </citation>
    <scope>NUCLEOTIDE SEQUENCE [LARGE SCALE GENOMIC DNA]</scope>
    <source>
        <strain>IP32953</strain>
    </source>
</reference>
<gene>
    <name evidence="1" type="primary">panC</name>
    <name type="ordered locus">YPTB0729</name>
</gene>
<dbReference type="EC" id="6.3.2.1" evidence="1"/>
<dbReference type="EMBL" id="BX936398">
    <property type="protein sequence ID" value="CAH19969.1"/>
    <property type="molecule type" value="Genomic_DNA"/>
</dbReference>
<dbReference type="RefSeq" id="WP_011191752.1">
    <property type="nucleotide sequence ID" value="NC_006155.1"/>
</dbReference>
<dbReference type="SMR" id="Q66EG4"/>
<dbReference type="GeneID" id="49787266"/>
<dbReference type="KEGG" id="ypo:BZ17_1826"/>
<dbReference type="KEGG" id="yps:YPTB0729"/>
<dbReference type="PATRIC" id="fig|273123.14.peg.1936"/>
<dbReference type="UniPathway" id="UPA00028">
    <property type="reaction ID" value="UER00005"/>
</dbReference>
<dbReference type="Proteomes" id="UP000001011">
    <property type="component" value="Chromosome"/>
</dbReference>
<dbReference type="GO" id="GO:0005829">
    <property type="term" value="C:cytosol"/>
    <property type="evidence" value="ECO:0007669"/>
    <property type="project" value="TreeGrafter"/>
</dbReference>
<dbReference type="GO" id="GO:0005524">
    <property type="term" value="F:ATP binding"/>
    <property type="evidence" value="ECO:0007669"/>
    <property type="project" value="UniProtKB-KW"/>
</dbReference>
<dbReference type="GO" id="GO:0004592">
    <property type="term" value="F:pantoate-beta-alanine ligase activity"/>
    <property type="evidence" value="ECO:0007669"/>
    <property type="project" value="UniProtKB-UniRule"/>
</dbReference>
<dbReference type="GO" id="GO:0015940">
    <property type="term" value="P:pantothenate biosynthetic process"/>
    <property type="evidence" value="ECO:0007669"/>
    <property type="project" value="UniProtKB-UniRule"/>
</dbReference>
<dbReference type="CDD" id="cd00560">
    <property type="entry name" value="PanC"/>
    <property type="match status" value="1"/>
</dbReference>
<dbReference type="FunFam" id="3.30.1300.10:FF:000001">
    <property type="entry name" value="Pantothenate synthetase"/>
    <property type="match status" value="1"/>
</dbReference>
<dbReference type="FunFam" id="3.40.50.620:FF:000013">
    <property type="entry name" value="Pantothenate synthetase"/>
    <property type="match status" value="1"/>
</dbReference>
<dbReference type="Gene3D" id="3.40.50.620">
    <property type="entry name" value="HUPs"/>
    <property type="match status" value="1"/>
</dbReference>
<dbReference type="Gene3D" id="3.30.1300.10">
    <property type="entry name" value="Pantoate-beta-alanine ligase, C-terminal domain"/>
    <property type="match status" value="1"/>
</dbReference>
<dbReference type="HAMAP" id="MF_00158">
    <property type="entry name" value="PanC"/>
    <property type="match status" value="1"/>
</dbReference>
<dbReference type="InterPro" id="IPR003721">
    <property type="entry name" value="Pantoate_ligase"/>
</dbReference>
<dbReference type="InterPro" id="IPR042176">
    <property type="entry name" value="Pantoate_ligase_C"/>
</dbReference>
<dbReference type="InterPro" id="IPR014729">
    <property type="entry name" value="Rossmann-like_a/b/a_fold"/>
</dbReference>
<dbReference type="NCBIfam" id="TIGR00018">
    <property type="entry name" value="panC"/>
    <property type="match status" value="1"/>
</dbReference>
<dbReference type="PANTHER" id="PTHR21299">
    <property type="entry name" value="CYTIDYLATE KINASE/PANTOATE-BETA-ALANINE LIGASE"/>
    <property type="match status" value="1"/>
</dbReference>
<dbReference type="PANTHER" id="PTHR21299:SF1">
    <property type="entry name" value="PANTOATE--BETA-ALANINE LIGASE"/>
    <property type="match status" value="1"/>
</dbReference>
<dbReference type="Pfam" id="PF02569">
    <property type="entry name" value="Pantoate_ligase"/>
    <property type="match status" value="1"/>
</dbReference>
<dbReference type="SUPFAM" id="SSF52374">
    <property type="entry name" value="Nucleotidylyl transferase"/>
    <property type="match status" value="1"/>
</dbReference>
<evidence type="ECO:0000255" key="1">
    <source>
        <dbReference type="HAMAP-Rule" id="MF_00158"/>
    </source>
</evidence>
<comment type="function">
    <text evidence="1">Catalyzes the condensation of pantoate with beta-alanine in an ATP-dependent reaction via a pantoyl-adenylate intermediate.</text>
</comment>
<comment type="catalytic activity">
    <reaction evidence="1">
        <text>(R)-pantoate + beta-alanine + ATP = (R)-pantothenate + AMP + diphosphate + H(+)</text>
        <dbReference type="Rhea" id="RHEA:10912"/>
        <dbReference type="ChEBI" id="CHEBI:15378"/>
        <dbReference type="ChEBI" id="CHEBI:15980"/>
        <dbReference type="ChEBI" id="CHEBI:29032"/>
        <dbReference type="ChEBI" id="CHEBI:30616"/>
        <dbReference type="ChEBI" id="CHEBI:33019"/>
        <dbReference type="ChEBI" id="CHEBI:57966"/>
        <dbReference type="ChEBI" id="CHEBI:456215"/>
        <dbReference type="EC" id="6.3.2.1"/>
    </reaction>
</comment>
<comment type="pathway">
    <text evidence="1">Cofactor biosynthesis; (R)-pantothenate biosynthesis; (R)-pantothenate from (R)-pantoate and beta-alanine: step 1/1.</text>
</comment>
<comment type="subunit">
    <text evidence="1">Homodimer.</text>
</comment>
<comment type="subcellular location">
    <subcellularLocation>
        <location evidence="1">Cytoplasm</location>
    </subcellularLocation>
</comment>
<comment type="miscellaneous">
    <text evidence="1">The reaction proceeds by a bi uni uni bi ping pong mechanism.</text>
</comment>
<comment type="similarity">
    <text evidence="1">Belongs to the pantothenate synthetase family.</text>
</comment>
<keyword id="KW-0067">ATP-binding</keyword>
<keyword id="KW-0963">Cytoplasm</keyword>
<keyword id="KW-0436">Ligase</keyword>
<keyword id="KW-0547">Nucleotide-binding</keyword>
<keyword id="KW-0566">Pantothenate biosynthesis</keyword>
<proteinExistence type="inferred from homology"/>
<protein>
    <recommendedName>
        <fullName evidence="1">Pantothenate synthetase</fullName>
        <shortName evidence="1">PS</shortName>
        <ecNumber evidence="1">6.3.2.1</ecNumber>
    </recommendedName>
    <alternativeName>
        <fullName evidence="1">Pantoate--beta-alanine ligase</fullName>
    </alternativeName>
    <alternativeName>
        <fullName evidence="1">Pantoate-activating enzyme</fullName>
    </alternativeName>
</protein>
<name>PANC_YERPS</name>